<reference key="1">
    <citation type="journal article" date="1995" name="Virology">
        <title>The DNA sequence of human herpesvirus-6: structure, coding content, and genome evolution.</title>
        <authorList>
            <person name="Gompels U.A."/>
            <person name="Nicholas J."/>
            <person name="Lawrence G.L."/>
            <person name="Jones M."/>
            <person name="Thomson B.J."/>
            <person name="Martin M.E.D."/>
            <person name="Efstathiou S."/>
            <person name="Craxton M.A."/>
            <person name="Macaulay H.A."/>
        </authorList>
    </citation>
    <scope>NUCLEOTIDE SEQUENCE [LARGE SCALE GENOMIC DNA]</scope>
</reference>
<reference key="2">
    <citation type="journal article" date="2010" name="J. Virol.">
        <title>The DR1 and DR6 first exons of human herpesvirus 6A are not required for virus replication in culture and are deleted in virus stocks that replicate well in T-cell lines.</title>
        <authorList>
            <person name="Borenstein R."/>
            <person name="Zeigerman H."/>
            <person name="Frenkel N."/>
        </authorList>
    </citation>
    <scope>CHARACTERIZATION</scope>
</reference>
<gene>
    <name type="primary">DR1L</name>
</gene>
<gene>
    <name type="primary">DR1R</name>
</gene>
<accession>Q89746</accession>
<accession>A0A2N9DYY5</accession>
<keyword id="KW-1185">Reference proteome</keyword>
<name>DR1_HHV6U</name>
<organismHost>
    <name type="scientific">Homo sapiens</name>
    <name type="common">Human</name>
    <dbReference type="NCBI Taxonomy" id="9606"/>
</organismHost>
<sequence>MPLTVRAGHAPYRLPLSNYWWLLLGRHSLRHVHSYLRLHKGLRIPLPWPEQECLHLHPKPYKCLLRYPCITRQPHLLQGWPTKSSLWFDPKPYHPSADSKLLPLGLITLSACSTRVSATTRWSSFHATDPSLSWLTGSSPWLVILQGQGGSLFCHDVLQGRLYILSHSVSLFLKTGLRHCEAIYRAPLWRDRPLPSLWTCRDPDKAFLPTLLARSARRGLAAFYALWRLHLGSRSELSHPVLEWESTELVLTDWRRGRNEAQRDAPSVAEHFARCRPLLDELCGEGGWLPFAFLSTSPHVWLILTEGGPVLAVDVNDTSVWRIADDLELLRRLGSLLLLSGLRLPLRPPSGSGEAAGEPGYEEEERRGRASTASATAATSTRGPTRPTRVTRKGRVATGGVHLSARPESEEQTDGHHGRQESSDDHQRGGSGRGHRDDGAHRHANDKTEPQQRGEHEERKQTDSGRHEHAQESQVARRDEEETEQGDSERSCGGATQTYGGRGRHDSCPSIPLSVPGPDPRLWVPPPHLLFPSPLPPMTPVDDEPSVRPRCPPGPAEEPPTCRPRPPRPSSDTPLSAVSRPSAPPVPPPSTARVRFFLSSSSSSPSYSPAPLSPPSPVSPSSPRSPFIPPIRSPGLRAKPRVSSGHPAAFPPAPSSAPARSERVTSVPSSASPSASCVGKSQPPAAHTA</sequence>
<feature type="chain" id="PRO_0000342561" description="Uncharacterized protein DR1">
    <location>
        <begin position="1"/>
        <end position="689"/>
    </location>
</feature>
<feature type="region of interest" description="Disordered" evidence="1">
    <location>
        <begin position="347"/>
        <end position="689"/>
    </location>
</feature>
<feature type="compositionally biased region" description="Low complexity" evidence="1">
    <location>
        <begin position="347"/>
        <end position="359"/>
    </location>
</feature>
<feature type="compositionally biased region" description="Low complexity" evidence="1">
    <location>
        <begin position="370"/>
        <end position="388"/>
    </location>
</feature>
<feature type="compositionally biased region" description="Basic and acidic residues" evidence="1">
    <location>
        <begin position="405"/>
        <end position="480"/>
    </location>
</feature>
<feature type="compositionally biased region" description="Pro residues" evidence="1">
    <location>
        <begin position="515"/>
        <end position="539"/>
    </location>
</feature>
<feature type="compositionally biased region" description="Pro residues" evidence="1">
    <location>
        <begin position="550"/>
        <end position="569"/>
    </location>
</feature>
<feature type="compositionally biased region" description="Low complexity" evidence="1">
    <location>
        <begin position="570"/>
        <end position="581"/>
    </location>
</feature>
<feature type="compositionally biased region" description="Low complexity" evidence="1">
    <location>
        <begin position="591"/>
        <end position="610"/>
    </location>
</feature>
<feature type="compositionally biased region" description="Pro residues" evidence="1">
    <location>
        <begin position="611"/>
        <end position="620"/>
    </location>
</feature>
<feature type="compositionally biased region" description="Low complexity" evidence="1">
    <location>
        <begin position="666"/>
        <end position="676"/>
    </location>
</feature>
<comment type="miscellaneous">
    <text evidence="2">DR1 gene is not required for propagation in cell culture (PubMed:20053742). Loss of a part of the DR region may occur in viruses propagated on cell cultures (PubMed:20053742).</text>
</comment>
<evidence type="ECO:0000256" key="1">
    <source>
        <dbReference type="SAM" id="MobiDB-lite"/>
    </source>
</evidence>
<evidence type="ECO:0000269" key="2">
    <source>
    </source>
</evidence>
<proteinExistence type="evidence at protein level"/>
<organism>
    <name type="scientific">Human herpesvirus 6A (strain Uganda-1102)</name>
    <name type="common">HHV-6 variant A</name>
    <name type="synonym">Human B lymphotropic virus</name>
    <dbReference type="NCBI Taxonomy" id="10370"/>
    <lineage>
        <taxon>Viruses</taxon>
        <taxon>Duplodnaviria</taxon>
        <taxon>Heunggongvirae</taxon>
        <taxon>Peploviricota</taxon>
        <taxon>Herviviricetes</taxon>
        <taxon>Herpesvirales</taxon>
        <taxon>Orthoherpesviridae</taxon>
        <taxon>Betaherpesvirinae</taxon>
        <taxon>Roseolovirus</taxon>
        <taxon>Roseolovirus humanbeta6a</taxon>
        <taxon>Human betaherpesvirus 6A</taxon>
    </lineage>
</organism>
<protein>
    <recommendedName>
        <fullName>Uncharacterized protein DR1</fullName>
    </recommendedName>
</protein>
<dbReference type="EMBL" id="X83413">
    <property type="protein sequence ID" value="SPC53468.1"/>
    <property type="molecule type" value="Genomic_DNA"/>
</dbReference>
<dbReference type="EMBL" id="X83413">
    <property type="protein sequence ID" value="SPC53506.1"/>
    <property type="molecule type" value="Genomic_DNA"/>
</dbReference>
<dbReference type="Proteomes" id="UP000009295">
    <property type="component" value="Segment"/>
</dbReference>
<dbReference type="PRINTS" id="PR01217">
    <property type="entry name" value="PRICHEXTENSN"/>
</dbReference>